<sequence>MTTAAIPGLQGEAPTNNQELLNWIAEAVELFQPEAVVFADGSQEEWDRMAEELVEAGTLIRLNEEKRPNSFLARSNPSDVARVESRTFICSENQEDAGPTNNWAPPQAMKEEMTEVYRGSMKGRTMYVVPFCMGPITDPEPKLGVQLTDSAYVVMSMRIMTRMGKDALDKIGENGSFVRCLHSVGAPLEEGQEDVAWPCNDTKYITQFPETKEIWSYGSGYGGNAILAKKCYALRIASVMAREEGWMAEHMLILKLTNPEGQAYHIAAAFPSACGKTNLAMITPTIPGWKAEVVGDDIAWLKFREDGHLYAVNPENGFFGVAPGTNYASNPIAMQTMEPGNTLFTNVALTDDGDIWWEGMDGDAPEHLIDWKGNDWTPESNQPAAHPNSRYCVAIEQCPTAAPEFNDWKGVKVDAILFGGRRPDTVPLVTQTHDWEHGTMVGALLASGQTAASAEAKVGTLRHDPMAMLPFMGYNAGEYLQNWIDMGNKGGDKMPSIFLVNWFRRGEDGRFLWPGFGENSRVLKWVIDRIEGRVGAEETVVGYTARAEDLDLEGLDTPIEDIREALTAPAEQWAADLEDNAEYLTFLGPKVPTEVHEQFEALKKRIQAAQAS</sequence>
<evidence type="ECO:0000255" key="1">
    <source>
        <dbReference type="HAMAP-Rule" id="MF_00452"/>
    </source>
</evidence>
<evidence type="ECO:0000305" key="2"/>
<organism>
    <name type="scientific">Corynebacterium efficiens (strain DSM 44549 / YS-314 / AJ 12310 / JCM 11189 / NBRC 100395)</name>
    <dbReference type="NCBI Taxonomy" id="196164"/>
    <lineage>
        <taxon>Bacteria</taxon>
        <taxon>Bacillati</taxon>
        <taxon>Actinomycetota</taxon>
        <taxon>Actinomycetes</taxon>
        <taxon>Mycobacteriales</taxon>
        <taxon>Corynebacteriaceae</taxon>
        <taxon>Corynebacterium</taxon>
    </lineage>
</organism>
<accession>Q8FM16</accession>
<name>PCKG_COREF</name>
<reference key="1">
    <citation type="journal article" date="2003" name="Genome Res.">
        <title>Comparative complete genome sequence analysis of the amino acid replacements responsible for the thermostability of Corynebacterium efficiens.</title>
        <authorList>
            <person name="Nishio Y."/>
            <person name="Nakamura Y."/>
            <person name="Kawarabayasi Y."/>
            <person name="Usuda Y."/>
            <person name="Kimura E."/>
            <person name="Sugimoto S."/>
            <person name="Matsui K."/>
            <person name="Yamagishi A."/>
            <person name="Kikuchi H."/>
            <person name="Ikeo K."/>
            <person name="Gojobori T."/>
        </authorList>
    </citation>
    <scope>NUCLEOTIDE SEQUENCE [LARGE SCALE GENOMIC DNA]</scope>
    <source>
        <strain>DSM 44549 / YS-314 / AJ 12310 / JCM 11189 / NBRC 100395</strain>
    </source>
</reference>
<keyword id="KW-0963">Cytoplasm</keyword>
<keyword id="KW-0210">Decarboxylase</keyword>
<keyword id="KW-0312">Gluconeogenesis</keyword>
<keyword id="KW-0342">GTP-binding</keyword>
<keyword id="KW-0456">Lyase</keyword>
<keyword id="KW-0464">Manganese</keyword>
<keyword id="KW-0479">Metal-binding</keyword>
<keyword id="KW-0547">Nucleotide-binding</keyword>
<keyword id="KW-1185">Reference proteome</keyword>
<dbReference type="EC" id="4.1.1.32" evidence="1"/>
<dbReference type="EMBL" id="BA000035">
    <property type="protein sequence ID" value="BAC19501.1"/>
    <property type="status" value="ALT_INIT"/>
    <property type="molecule type" value="Genomic_DNA"/>
</dbReference>
<dbReference type="RefSeq" id="WP_035109279.1">
    <property type="nucleotide sequence ID" value="NC_004369.1"/>
</dbReference>
<dbReference type="SMR" id="Q8FM16"/>
<dbReference type="STRING" id="196164.gene:10743139"/>
<dbReference type="KEGG" id="cef:CE2691"/>
<dbReference type="eggNOG" id="COG1274">
    <property type="taxonomic scope" value="Bacteria"/>
</dbReference>
<dbReference type="HOGENOM" id="CLU_028872_1_1_11"/>
<dbReference type="OrthoDB" id="9758871at2"/>
<dbReference type="UniPathway" id="UPA00138"/>
<dbReference type="Proteomes" id="UP000001409">
    <property type="component" value="Chromosome"/>
</dbReference>
<dbReference type="GO" id="GO:0005829">
    <property type="term" value="C:cytosol"/>
    <property type="evidence" value="ECO:0007669"/>
    <property type="project" value="TreeGrafter"/>
</dbReference>
<dbReference type="GO" id="GO:0005525">
    <property type="term" value="F:GTP binding"/>
    <property type="evidence" value="ECO:0007669"/>
    <property type="project" value="UniProtKB-UniRule"/>
</dbReference>
<dbReference type="GO" id="GO:0030145">
    <property type="term" value="F:manganese ion binding"/>
    <property type="evidence" value="ECO:0007669"/>
    <property type="project" value="UniProtKB-UniRule"/>
</dbReference>
<dbReference type="GO" id="GO:0004613">
    <property type="term" value="F:phosphoenolpyruvate carboxykinase (GTP) activity"/>
    <property type="evidence" value="ECO:0007669"/>
    <property type="project" value="UniProtKB-UniRule"/>
</dbReference>
<dbReference type="GO" id="GO:0071333">
    <property type="term" value="P:cellular response to glucose stimulus"/>
    <property type="evidence" value="ECO:0007669"/>
    <property type="project" value="TreeGrafter"/>
</dbReference>
<dbReference type="GO" id="GO:0006094">
    <property type="term" value="P:gluconeogenesis"/>
    <property type="evidence" value="ECO:0007669"/>
    <property type="project" value="UniProtKB-UniRule"/>
</dbReference>
<dbReference type="GO" id="GO:0046327">
    <property type="term" value="P:glycerol biosynthetic process from pyruvate"/>
    <property type="evidence" value="ECO:0007669"/>
    <property type="project" value="TreeGrafter"/>
</dbReference>
<dbReference type="GO" id="GO:0006107">
    <property type="term" value="P:oxaloacetate metabolic process"/>
    <property type="evidence" value="ECO:0007669"/>
    <property type="project" value="TreeGrafter"/>
</dbReference>
<dbReference type="GO" id="GO:0019543">
    <property type="term" value="P:propionate catabolic process"/>
    <property type="evidence" value="ECO:0007669"/>
    <property type="project" value="TreeGrafter"/>
</dbReference>
<dbReference type="GO" id="GO:0033993">
    <property type="term" value="P:response to lipid"/>
    <property type="evidence" value="ECO:0007669"/>
    <property type="project" value="TreeGrafter"/>
</dbReference>
<dbReference type="GO" id="GO:0042594">
    <property type="term" value="P:response to starvation"/>
    <property type="evidence" value="ECO:0007669"/>
    <property type="project" value="TreeGrafter"/>
</dbReference>
<dbReference type="CDD" id="cd00819">
    <property type="entry name" value="PEPCK_GTP"/>
    <property type="match status" value="1"/>
</dbReference>
<dbReference type="FunFam" id="3.40.449.10:FF:000005">
    <property type="entry name" value="Phosphoenolpyruvate carboxykinase [GTP]"/>
    <property type="match status" value="1"/>
</dbReference>
<dbReference type="Gene3D" id="3.90.228.20">
    <property type="match status" value="1"/>
</dbReference>
<dbReference type="Gene3D" id="3.40.449.10">
    <property type="entry name" value="Phosphoenolpyruvate Carboxykinase, domain 1"/>
    <property type="match status" value="1"/>
</dbReference>
<dbReference type="Gene3D" id="2.170.8.10">
    <property type="entry name" value="Phosphoenolpyruvate Carboxykinase, domain 2"/>
    <property type="match status" value="1"/>
</dbReference>
<dbReference type="HAMAP" id="MF_00452">
    <property type="entry name" value="PEPCK_GTP"/>
    <property type="match status" value="1"/>
</dbReference>
<dbReference type="InterPro" id="IPR018091">
    <property type="entry name" value="PEP_carboxykin_GTP_CS"/>
</dbReference>
<dbReference type="InterPro" id="IPR013035">
    <property type="entry name" value="PEP_carboxykinase_C"/>
</dbReference>
<dbReference type="InterPro" id="IPR008209">
    <property type="entry name" value="PEP_carboxykinase_GTP"/>
</dbReference>
<dbReference type="InterPro" id="IPR035077">
    <property type="entry name" value="PEP_carboxykinase_GTP_C"/>
</dbReference>
<dbReference type="InterPro" id="IPR035078">
    <property type="entry name" value="PEP_carboxykinase_GTP_N"/>
</dbReference>
<dbReference type="InterPro" id="IPR008210">
    <property type="entry name" value="PEP_carboxykinase_N"/>
</dbReference>
<dbReference type="NCBIfam" id="NF003253">
    <property type="entry name" value="PRK04210.1"/>
    <property type="match status" value="1"/>
</dbReference>
<dbReference type="PANTHER" id="PTHR11561">
    <property type="entry name" value="PHOSPHOENOLPYRUVATE CARBOXYKINASE"/>
    <property type="match status" value="1"/>
</dbReference>
<dbReference type="PANTHER" id="PTHR11561:SF0">
    <property type="entry name" value="PHOSPHOENOLPYRUVATE CARBOXYKINASE [GTP]-RELATED"/>
    <property type="match status" value="1"/>
</dbReference>
<dbReference type="Pfam" id="PF00821">
    <property type="entry name" value="PEPCK_GTP"/>
    <property type="match status" value="1"/>
</dbReference>
<dbReference type="Pfam" id="PF17297">
    <property type="entry name" value="PEPCK_N"/>
    <property type="match status" value="1"/>
</dbReference>
<dbReference type="PIRSF" id="PIRSF001348">
    <property type="entry name" value="PEP_carboxykinase_GTP"/>
    <property type="match status" value="1"/>
</dbReference>
<dbReference type="SUPFAM" id="SSF68923">
    <property type="entry name" value="PEP carboxykinase N-terminal domain"/>
    <property type="match status" value="1"/>
</dbReference>
<dbReference type="SUPFAM" id="SSF53795">
    <property type="entry name" value="PEP carboxykinase-like"/>
    <property type="match status" value="1"/>
</dbReference>
<dbReference type="PROSITE" id="PS00505">
    <property type="entry name" value="PEPCK_GTP"/>
    <property type="match status" value="1"/>
</dbReference>
<protein>
    <recommendedName>
        <fullName evidence="1">Phosphoenolpyruvate carboxykinase [GTP]</fullName>
        <shortName evidence="1">PEP carboxykinase</shortName>
        <shortName evidence="1">PEPCK</shortName>
        <ecNumber evidence="1">4.1.1.32</ecNumber>
    </recommendedName>
</protein>
<proteinExistence type="inferred from homology"/>
<comment type="function">
    <text evidence="1">Catalyzes the conversion of oxaloacetate (OAA) to phosphoenolpyruvate (PEP), the rate-limiting step in the metabolic pathway that produces glucose from lactate and other precursors derived from the citric acid cycle.</text>
</comment>
<comment type="catalytic activity">
    <reaction evidence="1">
        <text>oxaloacetate + GTP = phosphoenolpyruvate + GDP + CO2</text>
        <dbReference type="Rhea" id="RHEA:10388"/>
        <dbReference type="ChEBI" id="CHEBI:16452"/>
        <dbReference type="ChEBI" id="CHEBI:16526"/>
        <dbReference type="ChEBI" id="CHEBI:37565"/>
        <dbReference type="ChEBI" id="CHEBI:58189"/>
        <dbReference type="ChEBI" id="CHEBI:58702"/>
        <dbReference type="EC" id="4.1.1.32"/>
    </reaction>
</comment>
<comment type="cofactor">
    <cofactor evidence="1">
        <name>Mn(2+)</name>
        <dbReference type="ChEBI" id="CHEBI:29035"/>
    </cofactor>
    <text evidence="1">Binds 1 Mn(2+) ion per subunit.</text>
</comment>
<comment type="pathway">
    <text evidence="1">Carbohydrate biosynthesis; gluconeogenesis.</text>
</comment>
<comment type="subunit">
    <text evidence="1">Monomer.</text>
</comment>
<comment type="subcellular location">
    <subcellularLocation>
        <location evidence="1">Cytoplasm</location>
    </subcellularLocation>
</comment>
<comment type="similarity">
    <text evidence="1">Belongs to the phosphoenolpyruvate carboxykinase [GTP] family.</text>
</comment>
<comment type="sequence caution" evidence="2">
    <conflict type="erroneous initiation">
        <sequence resource="EMBL-CDS" id="BAC19501"/>
    </conflict>
    <text>Extended N-terminus.</text>
</comment>
<gene>
    <name evidence="1" type="primary">pckG</name>
    <name type="synonym">pck</name>
    <name type="ordered locus">CE2691</name>
</gene>
<feature type="chain" id="PRO_0000103602" description="Phosphoenolpyruvate carboxykinase [GTP]">
    <location>
        <begin position="1"/>
        <end position="612"/>
    </location>
</feature>
<feature type="active site" evidence="1">
    <location>
        <position position="274"/>
    </location>
</feature>
<feature type="binding site" evidence="1">
    <location>
        <position position="82"/>
    </location>
    <ligand>
        <name>substrate</name>
    </ligand>
</feature>
<feature type="binding site" evidence="1">
    <location>
        <begin position="221"/>
        <end position="223"/>
    </location>
    <ligand>
        <name>substrate</name>
    </ligand>
</feature>
<feature type="binding site" evidence="1">
    <location>
        <position position="230"/>
    </location>
    <ligand>
        <name>Mn(2+)</name>
        <dbReference type="ChEBI" id="CHEBI:29035"/>
    </ligand>
</feature>
<feature type="binding site" evidence="1">
    <location>
        <position position="250"/>
    </location>
    <ligand>
        <name>Mn(2+)</name>
        <dbReference type="ChEBI" id="CHEBI:29035"/>
    </ligand>
</feature>
<feature type="binding site" evidence="1">
    <location>
        <position position="272"/>
    </location>
    <ligand>
        <name>substrate</name>
    </ligand>
</feature>
<feature type="binding site" evidence="1">
    <location>
        <begin position="273"/>
        <end position="278"/>
    </location>
    <ligand>
        <name>GTP</name>
        <dbReference type="ChEBI" id="CHEBI:37565"/>
    </ligand>
</feature>
<feature type="binding site" evidence="1">
    <location>
        <position position="297"/>
    </location>
    <ligand>
        <name>Mn(2+)</name>
        <dbReference type="ChEBI" id="CHEBI:29035"/>
    </ligand>
</feature>
<feature type="binding site" evidence="1">
    <location>
        <begin position="388"/>
        <end position="390"/>
    </location>
    <ligand>
        <name>substrate</name>
    </ligand>
</feature>
<feature type="binding site" evidence="1">
    <location>
        <position position="390"/>
    </location>
    <ligand>
        <name>GTP</name>
        <dbReference type="ChEBI" id="CHEBI:37565"/>
    </ligand>
</feature>
<feature type="binding site" evidence="1">
    <location>
        <position position="421"/>
    </location>
    <ligand>
        <name>GTP</name>
        <dbReference type="ChEBI" id="CHEBI:37565"/>
    </ligand>
</feature>
<feature type="binding site" evidence="1">
    <location>
        <begin position="516"/>
        <end position="519"/>
    </location>
    <ligand>
        <name>GTP</name>
        <dbReference type="ChEBI" id="CHEBI:37565"/>
    </ligand>
</feature>